<organism>
    <name type="scientific">Cyprinus carpio</name>
    <name type="common">Common carp</name>
    <dbReference type="NCBI Taxonomy" id="7962"/>
    <lineage>
        <taxon>Eukaryota</taxon>
        <taxon>Metazoa</taxon>
        <taxon>Chordata</taxon>
        <taxon>Craniata</taxon>
        <taxon>Vertebrata</taxon>
        <taxon>Euteleostomi</taxon>
        <taxon>Actinopterygii</taxon>
        <taxon>Neopterygii</taxon>
        <taxon>Teleostei</taxon>
        <taxon>Ostariophysi</taxon>
        <taxon>Cypriniformes</taxon>
        <taxon>Cyprinidae</taxon>
        <taxon>Cyprininae</taxon>
        <taxon>Cyprinus</taxon>
    </lineage>
</organism>
<comment type="function">
    <text evidence="2">Transcription factor that binds DNA in a non-specific manner, yet also specifically recognizes the core sequence 5'-CAC[GA]TG-3'. Activates the transcription of growth-related genes.</text>
</comment>
<comment type="subunit">
    <text evidence="1">Efficient DNA binding requires dimerization with another bHLH protein. Binds DNA as a heterodimer with MAX (By similarity).</text>
</comment>
<comment type="subcellular location">
    <subcellularLocation>
        <location>Nucleus</location>
    </subcellularLocation>
</comment>
<comment type="domain">
    <text evidence="2">The 9aaTAD motif is a transactivation domain present in a large number of yeast and animal transcription factors.</text>
</comment>
<dbReference type="EMBL" id="D37887">
    <property type="protein sequence ID" value="BAA07129.1"/>
    <property type="molecule type" value="Genomic_DNA"/>
</dbReference>
<dbReference type="SMR" id="Q90341"/>
<dbReference type="GlyCosmos" id="Q90341">
    <property type="glycosylation" value="1 site, No reported glycans"/>
</dbReference>
<dbReference type="Ensembl" id="ENSCCRT00010112801.1">
    <property type="protein sequence ID" value="ENSCCRP00010101549.1"/>
    <property type="gene ID" value="ENSCCRG00010044683.1"/>
</dbReference>
<dbReference type="Proteomes" id="UP000694384">
    <property type="component" value="Unplaced"/>
</dbReference>
<dbReference type="Proteomes" id="UP000694427">
    <property type="component" value="Unplaced"/>
</dbReference>
<dbReference type="Proteomes" id="UP000694700">
    <property type="component" value="Unplaced"/>
</dbReference>
<dbReference type="Proteomes" id="UP000694701">
    <property type="component" value="Unplaced"/>
</dbReference>
<dbReference type="Proteomes" id="UP001155660">
    <property type="component" value="Unplaced"/>
</dbReference>
<dbReference type="GO" id="GO:0005634">
    <property type="term" value="C:nucleus"/>
    <property type="evidence" value="ECO:0007669"/>
    <property type="project" value="UniProtKB-SubCell"/>
</dbReference>
<dbReference type="GO" id="GO:0003677">
    <property type="term" value="F:DNA binding"/>
    <property type="evidence" value="ECO:0007669"/>
    <property type="project" value="UniProtKB-KW"/>
</dbReference>
<dbReference type="GO" id="GO:0000981">
    <property type="term" value="F:DNA-binding transcription factor activity, RNA polymerase II-specific"/>
    <property type="evidence" value="ECO:0000250"/>
    <property type="project" value="UniProtKB"/>
</dbReference>
<dbReference type="GO" id="GO:0046983">
    <property type="term" value="F:protein dimerization activity"/>
    <property type="evidence" value="ECO:0007669"/>
    <property type="project" value="InterPro"/>
</dbReference>
<dbReference type="CDD" id="cd11458">
    <property type="entry name" value="bHLHzip_c-Myc"/>
    <property type="match status" value="1"/>
</dbReference>
<dbReference type="FunFam" id="4.10.280.10:FF:000019">
    <property type="entry name" value="Myc proto-oncogene protein"/>
    <property type="match status" value="1"/>
</dbReference>
<dbReference type="Gene3D" id="4.10.280.10">
    <property type="entry name" value="Helix-loop-helix DNA-binding domain"/>
    <property type="match status" value="1"/>
</dbReference>
<dbReference type="InterPro" id="IPR011598">
    <property type="entry name" value="bHLH_dom"/>
</dbReference>
<dbReference type="InterPro" id="IPR036638">
    <property type="entry name" value="HLH_DNA-bd_sf"/>
</dbReference>
<dbReference type="InterPro" id="IPR003327">
    <property type="entry name" value="Myc-LZ"/>
</dbReference>
<dbReference type="InterPro" id="IPR050433">
    <property type="entry name" value="Myc_transcription_factors"/>
</dbReference>
<dbReference type="InterPro" id="IPR002418">
    <property type="entry name" value="Tscrpt_reg_Myc"/>
</dbReference>
<dbReference type="InterPro" id="IPR012682">
    <property type="entry name" value="Tscrpt_reg_Myc_N"/>
</dbReference>
<dbReference type="PANTHER" id="PTHR45851">
    <property type="entry name" value="MYC PROTO-ONCOGENE"/>
    <property type="match status" value="1"/>
</dbReference>
<dbReference type="Pfam" id="PF00010">
    <property type="entry name" value="HLH"/>
    <property type="match status" value="1"/>
</dbReference>
<dbReference type="Pfam" id="PF02344">
    <property type="entry name" value="Myc-LZ"/>
    <property type="match status" value="1"/>
</dbReference>
<dbReference type="Pfam" id="PF01056">
    <property type="entry name" value="Myc_N"/>
    <property type="match status" value="1"/>
</dbReference>
<dbReference type="PIRSF" id="PIRSF001705">
    <property type="entry name" value="Myc_protein"/>
    <property type="match status" value="1"/>
</dbReference>
<dbReference type="PRINTS" id="PR00044">
    <property type="entry name" value="LEUZIPPRMYC"/>
</dbReference>
<dbReference type="SMART" id="SM00353">
    <property type="entry name" value="HLH"/>
    <property type="match status" value="1"/>
</dbReference>
<dbReference type="SUPFAM" id="SSF47459">
    <property type="entry name" value="HLH, helix-loop-helix DNA-binding domain"/>
    <property type="match status" value="1"/>
</dbReference>
<dbReference type="PROSITE" id="PS50888">
    <property type="entry name" value="BHLH"/>
    <property type="match status" value="1"/>
</dbReference>
<keyword id="KW-0010">Activator</keyword>
<keyword id="KW-0238">DNA-binding</keyword>
<keyword id="KW-0325">Glycoprotein</keyword>
<keyword id="KW-0539">Nucleus</keyword>
<keyword id="KW-1185">Reference proteome</keyword>
<keyword id="KW-0804">Transcription</keyword>
<keyword id="KW-0805">Transcription regulation</keyword>
<gene>
    <name type="primary">myca</name>
    <name type="synonym">cam1</name>
    <name type="synonym">myc1</name>
</gene>
<protein>
    <recommendedName>
        <fullName>Transcriptional regulator Myc-1</fullName>
        <shortName>c-Myc-1</shortName>
    </recommendedName>
    <alternativeName>
        <fullName>c-Myc I</fullName>
    </alternativeName>
</protein>
<feature type="chain" id="PRO_0000127316" description="Transcriptional regulator Myc-1">
    <location>
        <begin position="1"/>
        <end position="394"/>
    </location>
</feature>
<feature type="domain" description="bHLH" evidence="3">
    <location>
        <begin position="310"/>
        <end position="362"/>
    </location>
</feature>
<feature type="region of interest" description="Disordered" evidence="4">
    <location>
        <begin position="177"/>
        <end position="247"/>
    </location>
</feature>
<feature type="region of interest" description="Disordered" evidence="4">
    <location>
        <begin position="283"/>
        <end position="318"/>
    </location>
</feature>
<feature type="region of interest" description="Leucine-zipper">
    <location>
        <begin position="369"/>
        <end position="390"/>
    </location>
</feature>
<feature type="short sequence motif" description="9aaTAD" evidence="2">
    <location>
        <begin position="76"/>
        <end position="84"/>
    </location>
</feature>
<feature type="compositionally biased region" description="Acidic residues" evidence="4">
    <location>
        <begin position="205"/>
        <end position="226"/>
    </location>
</feature>
<feature type="compositionally biased region" description="Basic and acidic residues" evidence="4">
    <location>
        <begin position="229"/>
        <end position="238"/>
    </location>
</feature>
<feature type="glycosylation site" description="O-linked (GlcNAc) threonine" evidence="1">
    <location>
        <position position="58"/>
    </location>
</feature>
<reference key="1">
    <citation type="journal article" date="1995" name="Gene">
        <title>Two c-myc genes from a tetraploid fish, the common carp (Cyprinus carpio).</title>
        <authorList>
            <person name="Zhang H."/>
            <person name="Okamoto N."/>
            <person name="Ikeda Y."/>
        </authorList>
    </citation>
    <scope>NUCLEOTIDE SEQUENCE [GENOMIC DNA]</scope>
    <source>
        <tissue>Hepatopancreas</tissue>
    </source>
</reference>
<sequence>MPVSASLAYKNYDYDYDSIQPYFYFDNDDEDFYHHQQGQTQPPAPSEDIWKKFELLPTPPLSPSRRQSLSTAEQLEMVSEFLGDDVVNQSFICDADYSQSFIKSIIIQDCMWSGFSAAAKLEKVVSERLASLHAARKELMSDSSSNRLNASYLQDVSTSASECIDPSVVFPYPLPESGKSSKVAPSEPMPVLDTPPNSSSSSGSDSEEEEEEEEEEEEEEEEEEIDVVTVEKRQKKNETAVSDSRYPSPLVLKRCHVSTHQHNYAAHPSTRHDQPAVKRLRLEASSNSNSRHVKQRKCTSPRTSDSEDNDKRRTHNVLERQRRNELKLSFFALRDEIPDVANNEKAAKVVILKKATECIHSMQLDEQRLLSIKEQLRRKSEQLKHRLQLLRSSH</sequence>
<name>MYC1_CYPCA</name>
<proteinExistence type="inferred from homology"/>
<accession>Q90341</accession>
<evidence type="ECO:0000250" key="1"/>
<evidence type="ECO:0000250" key="2">
    <source>
        <dbReference type="UniProtKB" id="P01106"/>
    </source>
</evidence>
<evidence type="ECO:0000255" key="3">
    <source>
        <dbReference type="PROSITE-ProRule" id="PRU00981"/>
    </source>
</evidence>
<evidence type="ECO:0000256" key="4">
    <source>
        <dbReference type="SAM" id="MobiDB-lite"/>
    </source>
</evidence>